<dbReference type="EC" id="2.5.1.75" evidence="1"/>
<dbReference type="EMBL" id="CP000849">
    <property type="protein sequence ID" value="ABV79335.1"/>
    <property type="molecule type" value="Genomic_DNA"/>
</dbReference>
<dbReference type="RefSeq" id="WP_012151982.1">
    <property type="nucleotide sequence ID" value="NC_009883.1"/>
</dbReference>
<dbReference type="SMR" id="A8GWV8"/>
<dbReference type="KEGG" id="rbo:A1I_05010"/>
<dbReference type="HOGENOM" id="CLU_032616_0_1_5"/>
<dbReference type="GO" id="GO:0005524">
    <property type="term" value="F:ATP binding"/>
    <property type="evidence" value="ECO:0007669"/>
    <property type="project" value="UniProtKB-UniRule"/>
</dbReference>
<dbReference type="GO" id="GO:0052381">
    <property type="term" value="F:tRNA dimethylallyltransferase activity"/>
    <property type="evidence" value="ECO:0007669"/>
    <property type="project" value="UniProtKB-UniRule"/>
</dbReference>
<dbReference type="GO" id="GO:0006400">
    <property type="term" value="P:tRNA modification"/>
    <property type="evidence" value="ECO:0007669"/>
    <property type="project" value="TreeGrafter"/>
</dbReference>
<dbReference type="Gene3D" id="1.10.20.140">
    <property type="match status" value="1"/>
</dbReference>
<dbReference type="Gene3D" id="3.40.50.300">
    <property type="entry name" value="P-loop containing nucleotide triphosphate hydrolases"/>
    <property type="match status" value="1"/>
</dbReference>
<dbReference type="HAMAP" id="MF_00185">
    <property type="entry name" value="IPP_trans"/>
    <property type="match status" value="1"/>
</dbReference>
<dbReference type="InterPro" id="IPR039657">
    <property type="entry name" value="Dimethylallyltransferase"/>
</dbReference>
<dbReference type="InterPro" id="IPR018022">
    <property type="entry name" value="IPT"/>
</dbReference>
<dbReference type="InterPro" id="IPR027417">
    <property type="entry name" value="P-loop_NTPase"/>
</dbReference>
<dbReference type="NCBIfam" id="TIGR00174">
    <property type="entry name" value="miaA"/>
    <property type="match status" value="1"/>
</dbReference>
<dbReference type="PANTHER" id="PTHR11088">
    <property type="entry name" value="TRNA DIMETHYLALLYLTRANSFERASE"/>
    <property type="match status" value="1"/>
</dbReference>
<dbReference type="PANTHER" id="PTHR11088:SF60">
    <property type="entry name" value="TRNA DIMETHYLALLYLTRANSFERASE"/>
    <property type="match status" value="1"/>
</dbReference>
<dbReference type="Pfam" id="PF01715">
    <property type="entry name" value="IPPT"/>
    <property type="match status" value="1"/>
</dbReference>
<dbReference type="SUPFAM" id="SSF52540">
    <property type="entry name" value="P-loop containing nucleoside triphosphate hydrolases"/>
    <property type="match status" value="1"/>
</dbReference>
<protein>
    <recommendedName>
        <fullName evidence="1">tRNA dimethylallyltransferase</fullName>
        <ecNumber evidence="1">2.5.1.75</ecNumber>
    </recommendedName>
    <alternativeName>
        <fullName evidence="1">Dimethylallyl diphosphate:tRNA dimethylallyltransferase</fullName>
        <shortName evidence="1">DMAPP:tRNA dimethylallyltransferase</shortName>
        <shortName evidence="1">DMATase</shortName>
    </alternativeName>
    <alternativeName>
        <fullName evidence="1">Isopentenyl-diphosphate:tRNA isopentenyltransferase</fullName>
        <shortName evidence="1">IPP transferase</shortName>
        <shortName evidence="1">IPPT</shortName>
        <shortName evidence="1">IPTase</shortName>
    </alternativeName>
</protein>
<organism>
    <name type="scientific">Rickettsia bellii (strain OSU 85-389)</name>
    <dbReference type="NCBI Taxonomy" id="391896"/>
    <lineage>
        <taxon>Bacteria</taxon>
        <taxon>Pseudomonadati</taxon>
        <taxon>Pseudomonadota</taxon>
        <taxon>Alphaproteobacteria</taxon>
        <taxon>Rickettsiales</taxon>
        <taxon>Rickettsiaceae</taxon>
        <taxon>Rickettsieae</taxon>
        <taxon>Rickettsia</taxon>
        <taxon>belli group</taxon>
    </lineage>
</organism>
<keyword id="KW-0067">ATP-binding</keyword>
<keyword id="KW-0460">Magnesium</keyword>
<keyword id="KW-0547">Nucleotide-binding</keyword>
<keyword id="KW-0808">Transferase</keyword>
<keyword id="KW-0819">tRNA processing</keyword>
<evidence type="ECO:0000255" key="1">
    <source>
        <dbReference type="HAMAP-Rule" id="MF_00185"/>
    </source>
</evidence>
<feature type="chain" id="PRO_1000020651" description="tRNA dimethylallyltransferase">
    <location>
        <begin position="1"/>
        <end position="315"/>
    </location>
</feature>
<feature type="region of interest" description="Interaction with substrate tRNA" evidence="1">
    <location>
        <begin position="36"/>
        <end position="39"/>
    </location>
</feature>
<feature type="region of interest" description="Interaction with substrate tRNA" evidence="1">
    <location>
        <begin position="160"/>
        <end position="164"/>
    </location>
</feature>
<feature type="binding site" evidence="1">
    <location>
        <begin position="11"/>
        <end position="18"/>
    </location>
    <ligand>
        <name>ATP</name>
        <dbReference type="ChEBI" id="CHEBI:30616"/>
    </ligand>
</feature>
<feature type="binding site" evidence="1">
    <location>
        <begin position="13"/>
        <end position="18"/>
    </location>
    <ligand>
        <name>substrate</name>
    </ligand>
</feature>
<feature type="site" description="Interaction with substrate tRNA" evidence="1">
    <location>
        <position position="102"/>
    </location>
</feature>
<feature type="site" description="Interaction with substrate tRNA" evidence="1">
    <location>
        <position position="124"/>
    </location>
</feature>
<sequence>MQKKEIIILCGPTASGKSYLGHALAKACDGEIINIDSMQVYKEIPIITASPPESYKSEIPYHLYNFLPITEDFSVVKYLKLAAEKINQVTASGKLPILIGGTGLYINSLVFGYNNIPDISEDLRQQVRKLHNEIGNTELHNRLTKLDPLASSKINQSDTQRLIRAYEVVLQTGKSIFSFQTLPKEQILSEFNFKIIFLNPERKFLYKICDERLANIFKDGAIDEIALIKKQFNPDYLNLKAVGIKEILAYLENKLTLSEALNLAQTRTRRYAKRQITWFKHQIKEKITLDYSNEEDFLQVTRKLSILIDLPNSNK</sequence>
<name>MIAA_RICB8</name>
<gene>
    <name evidence="1" type="primary">miaA</name>
    <name type="ordered locus">A1I_05010</name>
</gene>
<reference key="1">
    <citation type="submission" date="2007-09" db="EMBL/GenBank/DDBJ databases">
        <title>Complete genome sequencing of Rickettsia bellii.</title>
        <authorList>
            <person name="Madan A."/>
            <person name="Lee H."/>
            <person name="Madan A."/>
            <person name="Yoon J.-G."/>
            <person name="Ryu G.-Y."/>
            <person name="Dasch G."/>
            <person name="Ereemeva M."/>
        </authorList>
    </citation>
    <scope>NUCLEOTIDE SEQUENCE [LARGE SCALE GENOMIC DNA]</scope>
    <source>
        <strain>OSU 85-389</strain>
    </source>
</reference>
<proteinExistence type="inferred from homology"/>
<comment type="function">
    <text evidence="1">Catalyzes the transfer of a dimethylallyl group onto the adenine at position 37 in tRNAs that read codons beginning with uridine, leading to the formation of N6-(dimethylallyl)adenosine (i(6)A).</text>
</comment>
<comment type="catalytic activity">
    <reaction evidence="1">
        <text>adenosine(37) in tRNA + dimethylallyl diphosphate = N(6)-dimethylallyladenosine(37) in tRNA + diphosphate</text>
        <dbReference type="Rhea" id="RHEA:26482"/>
        <dbReference type="Rhea" id="RHEA-COMP:10162"/>
        <dbReference type="Rhea" id="RHEA-COMP:10375"/>
        <dbReference type="ChEBI" id="CHEBI:33019"/>
        <dbReference type="ChEBI" id="CHEBI:57623"/>
        <dbReference type="ChEBI" id="CHEBI:74411"/>
        <dbReference type="ChEBI" id="CHEBI:74415"/>
        <dbReference type="EC" id="2.5.1.75"/>
    </reaction>
</comment>
<comment type="cofactor">
    <cofactor evidence="1">
        <name>Mg(2+)</name>
        <dbReference type="ChEBI" id="CHEBI:18420"/>
    </cofactor>
</comment>
<comment type="subunit">
    <text evidence="1">Monomer.</text>
</comment>
<comment type="similarity">
    <text evidence="1">Belongs to the IPP transferase family.</text>
</comment>
<accession>A8GWV8</accession>